<sequence length="196" mass="20968">MCWAAAIPIAISGAQAISGQNAQAKMIAAQTAAGRRQAMEIMRQTNIQNADLSLQARSKLEEASAELTSQNMQKVQAIGSIRAAIGESMLEGSSMDRIKRVTEGQFIREANMVTENYRRDYQAIFAQQLGGTQSAASQIDEIYKSEQKQKSKLQMVLDPLAIMGSSAASAYASGAFDSKSTTKAPIVAAKGTKTGR</sequence>
<feature type="chain" id="PRO_0000106528" description="Internal virion protein gp14">
    <location>
        <begin position="1"/>
        <end position="196"/>
    </location>
</feature>
<feature type="helix" evidence="7">
    <location>
        <begin position="20"/>
        <end position="87"/>
    </location>
</feature>
<feature type="helix" evidence="7">
    <location>
        <begin position="94"/>
        <end position="144"/>
    </location>
</feature>
<reference key="1">
    <citation type="journal article" date="1983" name="J. Mol. Biol.">
        <title>Complete nucleotide sequence of bacteriophage T7 DNA and the locations of T7 genetic elements.</title>
        <authorList>
            <person name="Dunn J.J."/>
            <person name="Studier F.W."/>
        </authorList>
    </citation>
    <scope>NUCLEOTIDE SEQUENCE [LARGE SCALE GENOMIC DNA]</scope>
</reference>
<reference key="2">
    <citation type="journal article" date="2010" name="Virology">
        <title>Gp15 and gp16 cooperate in translocating bacteriophage T7 DNA into the infected cell.</title>
        <authorList>
            <person name="Chang C.Y."/>
            <person name="Kemp P."/>
            <person name="Molineux I.J."/>
        </authorList>
    </citation>
    <scope>SUBCELLULAR LOCATION</scope>
</reference>
<reference key="3">
    <citation type="journal article" date="2013" name="Proc. Natl. Acad. Sci. U.S.A.">
        <title>Visualization of uncorrelated, tandem symmetry mismatches in the internal genome packaging apparatus of bacteriophage T7.</title>
        <authorList>
            <person name="Guo F."/>
            <person name="Liu Z."/>
            <person name="Vago F."/>
            <person name="Ren Y."/>
            <person name="Wu W."/>
            <person name="Wright E.T."/>
            <person name="Serwer P."/>
            <person name="Jiang W."/>
        </authorList>
    </citation>
    <scope>INTERACTION WITH THE PORTAL PROTEIN AND GP15</scope>
</reference>
<reference key="4">
    <citation type="journal article" date="2013" name="J. Biol. Chem.">
        <title>Structural characterization of the bacteriophage T7 tail machinery.</title>
        <authorList>
            <person name="Cuervo A."/>
            <person name="Pulido-Cid M."/>
            <person name="Chagoyen M."/>
            <person name="Arranz R."/>
            <person name="Gonzalez-Garcia V.A."/>
            <person name="Garcia-Doval C."/>
            <person name="Caston J.R."/>
            <person name="Valpuesta J.M."/>
            <person name="van Raaij M.J."/>
            <person name="Martin-Benito J."/>
            <person name="Carrascosa J.L."/>
        </authorList>
    </citation>
    <scope>SUBCELLULAR LOCATION</scope>
</reference>
<reference key="5">
    <citation type="journal article" date="2013" name="Science">
        <title>The bacteriophage t7 virion undergoes extensive structural remodeling during infection.</title>
        <authorList>
            <person name="Hu B."/>
            <person name="Margolin W."/>
            <person name="Molineux I.J."/>
            <person name="Liu J."/>
        </authorList>
    </citation>
    <scope>SUBCELLULAR LOCATION</scope>
    <scope>FUNCTION</scope>
</reference>
<organism>
    <name type="scientific">Escherichia phage T7</name>
    <name type="common">Bacteriophage T7</name>
    <dbReference type="NCBI Taxonomy" id="10760"/>
    <lineage>
        <taxon>Viruses</taxon>
        <taxon>Duplodnaviria</taxon>
        <taxon>Heunggongvirae</taxon>
        <taxon>Uroviricota</taxon>
        <taxon>Caudoviricetes</taxon>
        <taxon>Autographiviridae</taxon>
        <taxon>Studiervirinae</taxon>
        <taxon>Teseptimavirus</taxon>
        <taxon>Teseptimavirus T7</taxon>
    </lineage>
</organism>
<name>GP14_BPT7</name>
<accession>P03724</accession>
<keyword id="KW-0002">3D-structure</keyword>
<keyword id="KW-1033">Host cell outer membrane</keyword>
<keyword id="KW-1043">Host membrane</keyword>
<keyword id="KW-0472">Membrane</keyword>
<keyword id="KW-1185">Reference proteome</keyword>
<keyword id="KW-1171">Viral genome ejection through host cell envelope</keyword>
<keyword id="KW-1162">Viral penetration into host cytoplasm</keyword>
<keyword id="KW-1244">Viral short tail ejection system</keyword>
<keyword id="KW-0946">Virion</keyword>
<keyword id="KW-1160">Virus entry into host cell</keyword>
<dbReference type="EMBL" id="V01146">
    <property type="protein sequence ID" value="CAA24432.1"/>
    <property type="molecule type" value="Genomic_DNA"/>
</dbReference>
<dbReference type="PIR" id="A04350">
    <property type="entry name" value="NIBPB7"/>
</dbReference>
<dbReference type="RefSeq" id="NP_042002.1">
    <property type="nucleotide sequence ID" value="NC_001604.1"/>
</dbReference>
<dbReference type="PDB" id="7EY7">
    <property type="method" value="EM"/>
    <property type="resolution" value="4.30 A"/>
    <property type="chains" value="A/B/C/D/E/F=1-196"/>
</dbReference>
<dbReference type="PDB" id="7EYB">
    <property type="method" value="EM"/>
    <property type="resolution" value="3.70 A"/>
    <property type="chains" value="a/b/c/d/e/f/g/h=1-196"/>
</dbReference>
<dbReference type="PDB" id="8E4G">
    <property type="method" value="EM"/>
    <property type="resolution" value="3.20 A"/>
    <property type="chains" value="a=19-145"/>
</dbReference>
<dbReference type="PDB" id="9JYY">
    <property type="method" value="EM"/>
    <property type="resolution" value="3.00 A"/>
    <property type="chains" value="S/T/c/d/e/f/g/h=1-196"/>
</dbReference>
<dbReference type="PDB" id="9JZ0">
    <property type="method" value="EM"/>
    <property type="resolution" value="3.50 A"/>
    <property type="chains" value="0/1/Y/Z/y/z=1-196"/>
</dbReference>
<dbReference type="PDBsum" id="7EY7"/>
<dbReference type="PDBsum" id="7EYB"/>
<dbReference type="PDBsum" id="8E4G"/>
<dbReference type="PDBsum" id="9JYY"/>
<dbReference type="PDBsum" id="9JZ0"/>
<dbReference type="EMDB" id="EMD-5566"/>
<dbReference type="EMDB" id="EMD-5567"/>
<dbReference type="EMDB" id="EMD-5568"/>
<dbReference type="EMDB" id="EMD-5569"/>
<dbReference type="EMDB" id="EMD-5570"/>
<dbReference type="EMDB" id="EMD-5571"/>
<dbReference type="EMDB" id="EMD-5572"/>
<dbReference type="EMDB" id="EMD-5573"/>
<dbReference type="EMDB" id="EMD-61909"/>
<dbReference type="EMDB" id="EMD-61911"/>
<dbReference type="SMR" id="P03724"/>
<dbReference type="TCDB" id="3.A.17.1.1">
    <property type="family name" value="the phage t7 injectisome (t7 injectisome) family"/>
</dbReference>
<dbReference type="KEGG" id="vg:1261032"/>
<dbReference type="OrthoDB" id="10053at10239"/>
<dbReference type="Proteomes" id="UP000000840">
    <property type="component" value="Genome"/>
</dbReference>
<dbReference type="GO" id="GO:0020002">
    <property type="term" value="C:host cell plasma membrane"/>
    <property type="evidence" value="ECO:0007669"/>
    <property type="project" value="UniProtKB-SubCell"/>
</dbReference>
<dbReference type="GO" id="GO:0016020">
    <property type="term" value="C:membrane"/>
    <property type="evidence" value="ECO:0007669"/>
    <property type="project" value="UniProtKB-KW"/>
</dbReference>
<dbReference type="GO" id="GO:0044423">
    <property type="term" value="C:virion component"/>
    <property type="evidence" value="ECO:0007669"/>
    <property type="project" value="UniProtKB-UniRule"/>
</dbReference>
<dbReference type="GO" id="GO:0099002">
    <property type="term" value="P:symbiont genome ejection through host cell envelope, short tail mechanism"/>
    <property type="evidence" value="ECO:0007669"/>
    <property type="project" value="UniProtKB-UniRule"/>
</dbReference>
<dbReference type="HAMAP" id="MF_04118">
    <property type="entry name" value="GP14_T7"/>
    <property type="match status" value="1"/>
</dbReference>
<dbReference type="InterPro" id="IPR038996">
    <property type="entry name" value="Gp14"/>
</dbReference>
<dbReference type="Pfam" id="PF24072">
    <property type="entry name" value="T7_gp14"/>
    <property type="match status" value="1"/>
</dbReference>
<organismHost>
    <name type="scientific">Escherichia coli</name>
    <dbReference type="NCBI Taxonomy" id="562"/>
</organismHost>
<proteinExistence type="evidence at protein level"/>
<gene>
    <name type="ordered locus">14</name>
</gene>
<comment type="function">
    <text evidence="1 6">Component of the cylindrical core that assembles on the inner surface of the capsid during capsid formation and plays a role in viral DNA ejection into the host cell. The inner core is composed of stacked rings of gp14, gp15 and gp16 proteins. Following binding to the host cell surface, the internal core is disassembled and gp14 is ejected along with gp15 and gp16 into the infected cell. May form a simple channel spanning the outer membrane.</text>
</comment>
<comment type="subunit">
    <text evidence="1 4">Interacts with the portal protein. Interacts with gp15.</text>
</comment>
<comment type="subcellular location">
    <subcellularLocation>
        <location evidence="1 5">Virion</location>
    </subcellularLocation>
    <subcellularLocation>
        <location evidence="1 2 3">Host cell outer membrane</location>
    </subcellularLocation>
</comment>
<comment type="similarity">
    <text evidence="1">Belongs to the T7virus internal virion protein gp14 family.</text>
</comment>
<evidence type="ECO:0000255" key="1">
    <source>
        <dbReference type="HAMAP-Rule" id="MF_04118"/>
    </source>
</evidence>
<evidence type="ECO:0000269" key="2">
    <source>
    </source>
</evidence>
<evidence type="ECO:0000269" key="3">
    <source>
    </source>
</evidence>
<evidence type="ECO:0000269" key="4">
    <source>
    </source>
</evidence>
<evidence type="ECO:0000269" key="5">
    <source>
    </source>
</evidence>
<evidence type="ECO:0000305" key="6">
    <source>
    </source>
</evidence>
<evidence type="ECO:0007829" key="7">
    <source>
        <dbReference type="PDB" id="8E4G"/>
    </source>
</evidence>
<protein>
    <recommendedName>
        <fullName evidence="1">Internal virion protein gp14</fullName>
    </recommendedName>
    <alternativeName>
        <fullName>Gene product 14</fullName>
        <shortName>Gp14</shortName>
    </alternativeName>
</protein>